<evidence type="ECO:0000250" key="1"/>
<evidence type="ECO:0000305" key="2"/>
<protein>
    <recommendedName>
        <fullName>E3 ubiquitin ligase complex SCF subunit sconC</fullName>
    </recommendedName>
    <alternativeName>
        <fullName>Sulfur controller C</fullName>
    </alternativeName>
    <alternativeName>
        <fullName>Sulfur metabolite repression control protein C</fullName>
    </alternativeName>
</protein>
<comment type="function">
    <text evidence="1">Essential component of the SCF (SKP1-CUL1-F-box protein) E3 ubiquitin ligase complexes, which mediate the ubiquitination and subsequent proteasomal degradation of target proteins. Controls sulfur metabolite repression, probably by mediating the inactivation or degradation of the metR transcription factor (By similarity).</text>
</comment>
<comment type="pathway">
    <text>Protein modification; protein ubiquitination.</text>
</comment>
<comment type="subunit">
    <text evidence="1">Component of the SCF (SKP1-CUL1-F-box protein) E3 ubiquitin ligase complexes.</text>
</comment>
<comment type="similarity">
    <text evidence="2">Belongs to the SKP1 family.</text>
</comment>
<proteinExistence type="inferred from homology"/>
<reference key="1">
    <citation type="journal article" date="2012" name="MBio">
        <title>Comparative genome analysis of Trichophyton rubrum and related dermatophytes reveals candidate genes involved in infection.</title>
        <authorList>
            <person name="Martinez D.A."/>
            <person name="Oliver B.G."/>
            <person name="Graeser Y."/>
            <person name="Goldberg J.M."/>
            <person name="Li W."/>
            <person name="Martinez-Rossi N.M."/>
            <person name="Monod M."/>
            <person name="Shelest E."/>
            <person name="Barton R.C."/>
            <person name="Birch E."/>
            <person name="Brakhage A.A."/>
            <person name="Chen Z."/>
            <person name="Gurr S.J."/>
            <person name="Heiman D."/>
            <person name="Heitman J."/>
            <person name="Kosti I."/>
            <person name="Rossi A."/>
            <person name="Saif S."/>
            <person name="Samalova M."/>
            <person name="Saunders C.W."/>
            <person name="Shea T."/>
            <person name="Summerbell R.C."/>
            <person name="Xu J."/>
            <person name="Young S."/>
            <person name="Zeng Q."/>
            <person name="Birren B.W."/>
            <person name="Cuomo C.A."/>
            <person name="White T.C."/>
        </authorList>
    </citation>
    <scope>NUCLEOTIDE SEQUENCE [LARGE SCALE GENOMIC DNA]</scope>
    <source>
        <strain>ATCC MYA-4605 / CBS 113480</strain>
    </source>
</reference>
<organism>
    <name type="scientific">Arthroderma otae (strain ATCC MYA-4605 / CBS 113480)</name>
    <name type="common">Microsporum canis</name>
    <dbReference type="NCBI Taxonomy" id="554155"/>
    <lineage>
        <taxon>Eukaryota</taxon>
        <taxon>Fungi</taxon>
        <taxon>Dikarya</taxon>
        <taxon>Ascomycota</taxon>
        <taxon>Pezizomycotina</taxon>
        <taxon>Eurotiomycetes</taxon>
        <taxon>Eurotiomycetidae</taxon>
        <taxon>Onygenales</taxon>
        <taxon>Arthrodermataceae</taxon>
        <taxon>Microsporum</taxon>
    </lineage>
</organism>
<name>SKP1_ARTOC</name>
<gene>
    <name type="primary">sconC</name>
    <name type="synonym">skpA</name>
    <name type="ORF">MCYG_01748</name>
</gene>
<keyword id="KW-1185">Reference proteome</keyword>
<keyword id="KW-0833">Ubl conjugation pathway</keyword>
<dbReference type="EMBL" id="DS995702">
    <property type="protein sequence ID" value="EEQ28929.1"/>
    <property type="molecule type" value="Genomic_DNA"/>
</dbReference>
<dbReference type="RefSeq" id="XP_002848814.1">
    <property type="nucleotide sequence ID" value="XM_002848768.1"/>
</dbReference>
<dbReference type="SMR" id="C5FHU9"/>
<dbReference type="STRING" id="554155.C5FHU9"/>
<dbReference type="GeneID" id="9227793"/>
<dbReference type="VEuPathDB" id="FungiDB:MCYG_01748"/>
<dbReference type="eggNOG" id="KOG1724">
    <property type="taxonomic scope" value="Eukaryota"/>
</dbReference>
<dbReference type="HOGENOM" id="CLU_059252_4_0_1"/>
<dbReference type="OMA" id="DKYTASM"/>
<dbReference type="OrthoDB" id="2342932at2759"/>
<dbReference type="UniPathway" id="UPA00143"/>
<dbReference type="Proteomes" id="UP000002035">
    <property type="component" value="Unassembled WGS sequence"/>
</dbReference>
<dbReference type="GO" id="GO:0031518">
    <property type="term" value="C:CBF3 complex"/>
    <property type="evidence" value="ECO:0007669"/>
    <property type="project" value="EnsemblFungi"/>
</dbReference>
<dbReference type="GO" id="GO:0000776">
    <property type="term" value="C:kinetochore"/>
    <property type="evidence" value="ECO:0007669"/>
    <property type="project" value="EnsemblFungi"/>
</dbReference>
<dbReference type="GO" id="GO:0043224">
    <property type="term" value="C:nuclear SCF ubiquitin ligase complex"/>
    <property type="evidence" value="ECO:0007669"/>
    <property type="project" value="EnsemblFungi"/>
</dbReference>
<dbReference type="GO" id="GO:0043291">
    <property type="term" value="C:RAVE complex"/>
    <property type="evidence" value="ECO:0007669"/>
    <property type="project" value="EnsemblFungi"/>
</dbReference>
<dbReference type="GO" id="GO:0017117">
    <property type="term" value="C:single-stranded DNA-dependent ATP-dependent DNA helicase complex"/>
    <property type="evidence" value="ECO:0007669"/>
    <property type="project" value="EnsemblFungi"/>
</dbReference>
<dbReference type="GO" id="GO:0003688">
    <property type="term" value="F:DNA replication origin binding"/>
    <property type="evidence" value="ECO:0007669"/>
    <property type="project" value="EnsemblFungi"/>
</dbReference>
<dbReference type="GO" id="GO:0061630">
    <property type="term" value="F:ubiquitin protein ligase activity"/>
    <property type="evidence" value="ECO:0007669"/>
    <property type="project" value="EnsemblFungi"/>
</dbReference>
<dbReference type="GO" id="GO:0010458">
    <property type="term" value="P:exit from mitosis"/>
    <property type="evidence" value="ECO:0007669"/>
    <property type="project" value="EnsemblFungi"/>
</dbReference>
<dbReference type="GO" id="GO:0000082">
    <property type="term" value="P:G1/S transition of mitotic cell cycle"/>
    <property type="evidence" value="ECO:0007669"/>
    <property type="project" value="EnsemblFungi"/>
</dbReference>
<dbReference type="GO" id="GO:0000086">
    <property type="term" value="P:G2/M transition of mitotic cell cycle"/>
    <property type="evidence" value="ECO:0007669"/>
    <property type="project" value="EnsemblFungi"/>
</dbReference>
<dbReference type="GO" id="GO:0051382">
    <property type="term" value="P:kinetochore assembly"/>
    <property type="evidence" value="ECO:0007669"/>
    <property type="project" value="EnsemblFungi"/>
</dbReference>
<dbReference type="GO" id="GO:0101026">
    <property type="term" value="P:mitotic nuclear membrane biogenesis"/>
    <property type="evidence" value="ECO:0007669"/>
    <property type="project" value="EnsemblFungi"/>
</dbReference>
<dbReference type="GO" id="GO:2000766">
    <property type="term" value="P:negative regulation of cytoplasmic translation"/>
    <property type="evidence" value="ECO:0007669"/>
    <property type="project" value="EnsemblFungi"/>
</dbReference>
<dbReference type="GO" id="GO:0045841">
    <property type="term" value="P:negative regulation of mitotic metaphase/anaphase transition"/>
    <property type="evidence" value="ECO:0007669"/>
    <property type="project" value="EnsemblFungi"/>
</dbReference>
<dbReference type="GO" id="GO:0010828">
    <property type="term" value="P:positive regulation of D-glucose transmembrane transport"/>
    <property type="evidence" value="ECO:0007669"/>
    <property type="project" value="EnsemblFungi"/>
</dbReference>
<dbReference type="GO" id="GO:0045116">
    <property type="term" value="P:protein neddylation"/>
    <property type="evidence" value="ECO:0007669"/>
    <property type="project" value="EnsemblFungi"/>
</dbReference>
<dbReference type="GO" id="GO:0016567">
    <property type="term" value="P:protein ubiquitination"/>
    <property type="evidence" value="ECO:0007669"/>
    <property type="project" value="UniProtKB-UniPathway"/>
</dbReference>
<dbReference type="GO" id="GO:0000018">
    <property type="term" value="P:regulation of DNA recombination"/>
    <property type="evidence" value="ECO:0007669"/>
    <property type="project" value="EnsemblFungi"/>
</dbReference>
<dbReference type="GO" id="GO:0007096">
    <property type="term" value="P:regulation of exit from mitosis"/>
    <property type="evidence" value="ECO:0007669"/>
    <property type="project" value="EnsemblFungi"/>
</dbReference>
<dbReference type="GO" id="GO:0043254">
    <property type="term" value="P:regulation of protein-containing complex assembly"/>
    <property type="evidence" value="ECO:0007669"/>
    <property type="project" value="EnsemblFungi"/>
</dbReference>
<dbReference type="GO" id="GO:0000712">
    <property type="term" value="P:resolution of meiotic recombination intermediates"/>
    <property type="evidence" value="ECO:0007669"/>
    <property type="project" value="EnsemblFungi"/>
</dbReference>
<dbReference type="GO" id="GO:0031146">
    <property type="term" value="P:SCF-dependent proteasomal ubiquitin-dependent protein catabolic process"/>
    <property type="evidence" value="ECO:0007669"/>
    <property type="project" value="EnsemblFungi"/>
</dbReference>
<dbReference type="GO" id="GO:0000921">
    <property type="term" value="P:septin ring assembly"/>
    <property type="evidence" value="ECO:0007669"/>
    <property type="project" value="EnsemblFungi"/>
</dbReference>
<dbReference type="GO" id="GO:0030466">
    <property type="term" value="P:silent mating-type cassette heterochromatin formation"/>
    <property type="evidence" value="ECO:0007669"/>
    <property type="project" value="EnsemblFungi"/>
</dbReference>
<dbReference type="GO" id="GO:0007035">
    <property type="term" value="P:vacuolar acidification"/>
    <property type="evidence" value="ECO:0007669"/>
    <property type="project" value="EnsemblFungi"/>
</dbReference>
<dbReference type="GO" id="GO:0070072">
    <property type="term" value="P:vacuolar proton-transporting V-type ATPase complex assembly"/>
    <property type="evidence" value="ECO:0007669"/>
    <property type="project" value="EnsemblFungi"/>
</dbReference>
<dbReference type="CDD" id="cd18322">
    <property type="entry name" value="BTB_POZ_SKP1"/>
    <property type="match status" value="1"/>
</dbReference>
<dbReference type="FunFam" id="3.30.710.10:FF:000026">
    <property type="entry name" value="E3 ubiquitin ligase complex SCF subunit"/>
    <property type="match status" value="1"/>
</dbReference>
<dbReference type="Gene3D" id="3.30.710.10">
    <property type="entry name" value="Potassium Channel Kv1.1, Chain A"/>
    <property type="match status" value="1"/>
</dbReference>
<dbReference type="InterPro" id="IPR016897">
    <property type="entry name" value="SKP1"/>
</dbReference>
<dbReference type="InterPro" id="IPR001232">
    <property type="entry name" value="SKP1-like"/>
</dbReference>
<dbReference type="InterPro" id="IPR036296">
    <property type="entry name" value="SKP1-like_dim_sf"/>
</dbReference>
<dbReference type="InterPro" id="IPR011333">
    <property type="entry name" value="SKP1/BTB/POZ_sf"/>
</dbReference>
<dbReference type="InterPro" id="IPR016072">
    <property type="entry name" value="Skp1_comp_dimer"/>
</dbReference>
<dbReference type="InterPro" id="IPR016073">
    <property type="entry name" value="Skp1_comp_POZ"/>
</dbReference>
<dbReference type="PANTHER" id="PTHR11165">
    <property type="entry name" value="SKP1"/>
    <property type="match status" value="1"/>
</dbReference>
<dbReference type="Pfam" id="PF01466">
    <property type="entry name" value="Skp1"/>
    <property type="match status" value="1"/>
</dbReference>
<dbReference type="Pfam" id="PF03931">
    <property type="entry name" value="Skp1_POZ"/>
    <property type="match status" value="1"/>
</dbReference>
<dbReference type="PIRSF" id="PIRSF028729">
    <property type="entry name" value="E3_ubiquit_lig_SCF_Skp"/>
    <property type="match status" value="1"/>
</dbReference>
<dbReference type="SMART" id="SM00512">
    <property type="entry name" value="Skp1"/>
    <property type="match status" value="1"/>
</dbReference>
<dbReference type="SUPFAM" id="SSF54695">
    <property type="entry name" value="POZ domain"/>
    <property type="match status" value="1"/>
</dbReference>
<dbReference type="SUPFAM" id="SSF81382">
    <property type="entry name" value="Skp1 dimerisation domain-like"/>
    <property type="match status" value="1"/>
</dbReference>
<feature type="chain" id="PRO_0000397267" description="E3 ubiquitin ligase complex SCF subunit sconC">
    <location>
        <begin position="1"/>
        <end position="165"/>
    </location>
</feature>
<feature type="region of interest" description="Interaction with the F-box domain of F-box proteins" evidence="1">
    <location>
        <begin position="106"/>
        <end position="165"/>
    </location>
</feature>
<sequence length="165" mass="18766">MAATATSKITLTSSDGVEITIERQVAERSILIKNMLEDLGDSGEAIPIPNVNESVLKKVIEWCKHHKGDPPSTGDDDVDSRRKTTDIDEWDQKFMQVDQEMLFEIILAANYLDIKALLDVGCKTVANMIKGKSPEEIRKTFNIQNDFTPEEEDQIRRENEWAEDR</sequence>
<accession>C5FHU9</accession>